<accession>Q8WV19</accession>
<accession>Q5TI64</accession>
<accession>Q9UIC7</accession>
<protein>
    <recommendedName>
        <fullName>Vesicle transport protein SFT2A</fullName>
    </recommendedName>
    <alternativeName>
        <fullName>SFT2 domain-containing protein 1</fullName>
    </alternativeName>
    <alternativeName>
        <fullName>pRGR1</fullName>
    </alternativeName>
</protein>
<sequence>MEKLRRVLSGQDDEEQGLTAQVLDASSLSFNTRLKWFAICFVCGVFFSILGTGLLWLPGGIKLFAVFYTLGNLAALASTCFLMGPVKQLKKMFEATRLLATIVMLLCFIFTLCAALWWHKKGLAVLFCILQFLSMTWYSLSYIPYARDAVIKCCSSLLS</sequence>
<feature type="chain" id="PRO_0000238607" description="Vesicle transport protein SFT2A">
    <location>
        <begin position="1"/>
        <end position="159"/>
    </location>
</feature>
<feature type="topological domain" description="Cytoplasmic" evidence="3">
    <location>
        <begin position="1"/>
        <end position="36"/>
    </location>
</feature>
<feature type="transmembrane region" description="Helical; Name=1" evidence="3">
    <location>
        <begin position="37"/>
        <end position="57"/>
    </location>
</feature>
<feature type="topological domain" description="Lumenal" evidence="3">
    <location>
        <begin position="58"/>
        <end position="62"/>
    </location>
</feature>
<feature type="transmembrane region" description="Helical; Name=2" evidence="3">
    <location>
        <begin position="63"/>
        <end position="83"/>
    </location>
</feature>
<feature type="topological domain" description="Cytoplasmic" evidence="3">
    <location>
        <begin position="84"/>
        <end position="97"/>
    </location>
</feature>
<feature type="transmembrane region" description="Helical; Name=3" evidence="3">
    <location>
        <begin position="98"/>
        <end position="118"/>
    </location>
</feature>
<feature type="topological domain" description="Lumenal" evidence="3">
    <location>
        <begin position="119"/>
        <end position="122"/>
    </location>
</feature>
<feature type="transmembrane region" description="Helical; Name=4" evidence="3">
    <location>
        <begin position="123"/>
        <end position="143"/>
    </location>
</feature>
<feature type="topological domain" description="Cytoplasmic" evidence="3">
    <location>
        <begin position="144"/>
        <end position="159"/>
    </location>
</feature>
<feature type="modified residue" description="Phosphoserine" evidence="2">
    <location>
        <position position="9"/>
    </location>
</feature>
<feature type="sequence variant" id="VAR_034492" description="In dbSNP:rs11551053.">
    <original>I</original>
    <variation>V</variation>
    <location>
        <position position="109"/>
    </location>
</feature>
<feature type="sequence conflict" description="In Ref. 1; AAF18564." evidence="4" ref="1">
    <original>F</original>
    <variation>C</variation>
    <location>
        <position position="93"/>
    </location>
</feature>
<dbReference type="EMBL" id="AF041429">
    <property type="protein sequence ID" value="AAF18564.1"/>
    <property type="status" value="ALT_INIT"/>
    <property type="molecule type" value="mRNA"/>
</dbReference>
<dbReference type="EMBL" id="AL022069">
    <property type="status" value="NOT_ANNOTATED_CDS"/>
    <property type="molecule type" value="Genomic_DNA"/>
</dbReference>
<dbReference type="EMBL" id="AL121956">
    <property type="status" value="NOT_ANNOTATED_CDS"/>
    <property type="molecule type" value="Genomic_DNA"/>
</dbReference>
<dbReference type="EMBL" id="BC018969">
    <property type="protein sequence ID" value="AAH18969.1"/>
    <property type="molecule type" value="mRNA"/>
</dbReference>
<dbReference type="CCDS" id="CCDS5292.1"/>
<dbReference type="RefSeq" id="NP_660152.1">
    <property type="nucleotide sequence ID" value="NM_145169.3"/>
</dbReference>
<dbReference type="BioGRID" id="125243">
    <property type="interactions" value="45"/>
</dbReference>
<dbReference type="FunCoup" id="Q8WV19">
    <property type="interactions" value="2083"/>
</dbReference>
<dbReference type="IntAct" id="Q8WV19">
    <property type="interactions" value="47"/>
</dbReference>
<dbReference type="MINT" id="Q8WV19"/>
<dbReference type="STRING" id="9606.ENSP00000354590"/>
<dbReference type="GlyGen" id="Q8WV19">
    <property type="glycosylation" value="1 site, 1 O-linked glycan (1 site)"/>
</dbReference>
<dbReference type="iPTMnet" id="Q8WV19"/>
<dbReference type="PhosphoSitePlus" id="Q8WV19"/>
<dbReference type="SwissPalm" id="Q8WV19"/>
<dbReference type="BioMuta" id="SFT2D1"/>
<dbReference type="DMDM" id="74751535"/>
<dbReference type="jPOST" id="Q8WV19"/>
<dbReference type="MassIVE" id="Q8WV19"/>
<dbReference type="PaxDb" id="9606-ENSP00000354590"/>
<dbReference type="PeptideAtlas" id="Q8WV19"/>
<dbReference type="ProteomicsDB" id="74737"/>
<dbReference type="Pumba" id="Q8WV19"/>
<dbReference type="Antibodypedia" id="20056">
    <property type="antibodies" value="15 antibodies from 11 providers"/>
</dbReference>
<dbReference type="DNASU" id="113402"/>
<dbReference type="Ensembl" id="ENST00000361731.4">
    <property type="protein sequence ID" value="ENSP00000354590.3"/>
    <property type="gene ID" value="ENSG00000198818.10"/>
</dbReference>
<dbReference type="GeneID" id="113402"/>
<dbReference type="KEGG" id="hsa:113402"/>
<dbReference type="MANE-Select" id="ENST00000361731.4">
    <property type="protein sequence ID" value="ENSP00000354590.3"/>
    <property type="RefSeq nucleotide sequence ID" value="NM_145169.3"/>
    <property type="RefSeq protein sequence ID" value="NP_660152.1"/>
</dbReference>
<dbReference type="UCSC" id="uc003qux.4">
    <property type="organism name" value="human"/>
</dbReference>
<dbReference type="AGR" id="HGNC:21102"/>
<dbReference type="CTD" id="113402"/>
<dbReference type="DisGeNET" id="113402"/>
<dbReference type="GeneCards" id="SFT2D1"/>
<dbReference type="HGNC" id="HGNC:21102">
    <property type="gene designation" value="SFT2D1"/>
</dbReference>
<dbReference type="HPA" id="ENSG00000198818">
    <property type="expression patterns" value="Low tissue specificity"/>
</dbReference>
<dbReference type="neXtProt" id="NX_Q8WV19"/>
<dbReference type="OpenTargets" id="ENSG00000198818"/>
<dbReference type="PharmGKB" id="PA134962126"/>
<dbReference type="VEuPathDB" id="HostDB:ENSG00000198818"/>
<dbReference type="eggNOG" id="KOG2887">
    <property type="taxonomic scope" value="Eukaryota"/>
</dbReference>
<dbReference type="GeneTree" id="ENSGT00390000018525"/>
<dbReference type="HOGENOM" id="CLU_099529_2_2_1"/>
<dbReference type="InParanoid" id="Q8WV19"/>
<dbReference type="OMA" id="IAAIVWK"/>
<dbReference type="OrthoDB" id="73614at2759"/>
<dbReference type="PAN-GO" id="Q8WV19">
    <property type="GO annotations" value="0 GO annotations based on evolutionary models"/>
</dbReference>
<dbReference type="PhylomeDB" id="Q8WV19"/>
<dbReference type="TreeFam" id="TF315157"/>
<dbReference type="PathwayCommons" id="Q8WV19"/>
<dbReference type="SignaLink" id="Q8WV19"/>
<dbReference type="BioGRID-ORCS" id="113402">
    <property type="hits" value="9 hits in 1161 CRISPR screens"/>
</dbReference>
<dbReference type="ChiTaRS" id="SFT2D1">
    <property type="organism name" value="human"/>
</dbReference>
<dbReference type="GenomeRNAi" id="113402"/>
<dbReference type="Pharos" id="Q8WV19">
    <property type="development level" value="Tdark"/>
</dbReference>
<dbReference type="PRO" id="PR:Q8WV19"/>
<dbReference type="Proteomes" id="UP000005640">
    <property type="component" value="Chromosome 6"/>
</dbReference>
<dbReference type="RNAct" id="Q8WV19">
    <property type="molecule type" value="protein"/>
</dbReference>
<dbReference type="Bgee" id="ENSG00000198818">
    <property type="expression patterns" value="Expressed in epithelial cell of pancreas and 188 other cell types or tissues"/>
</dbReference>
<dbReference type="GO" id="GO:0005737">
    <property type="term" value="C:cytoplasm"/>
    <property type="evidence" value="ECO:0007669"/>
    <property type="project" value="UniProtKB-ARBA"/>
</dbReference>
<dbReference type="GO" id="GO:0012505">
    <property type="term" value="C:endomembrane system"/>
    <property type="evidence" value="ECO:0007669"/>
    <property type="project" value="UniProtKB-ARBA"/>
</dbReference>
<dbReference type="GO" id="GO:0043231">
    <property type="term" value="C:intracellular membrane-bounded organelle"/>
    <property type="evidence" value="ECO:0007669"/>
    <property type="project" value="UniProtKB-ARBA"/>
</dbReference>
<dbReference type="GO" id="GO:0016020">
    <property type="term" value="C:membrane"/>
    <property type="evidence" value="ECO:0007669"/>
    <property type="project" value="UniProtKB-SubCell"/>
</dbReference>
<dbReference type="GO" id="GO:0015031">
    <property type="term" value="P:protein transport"/>
    <property type="evidence" value="ECO:0007669"/>
    <property type="project" value="UniProtKB-KW"/>
</dbReference>
<dbReference type="GO" id="GO:0016192">
    <property type="term" value="P:vesicle-mediated transport"/>
    <property type="evidence" value="ECO:0007669"/>
    <property type="project" value="InterPro"/>
</dbReference>
<dbReference type="InterPro" id="IPR007305">
    <property type="entry name" value="Vesicle_transpt_Got1/SFT2"/>
</dbReference>
<dbReference type="InterPro" id="IPR011691">
    <property type="entry name" value="Vesicle_transpt_SFT2"/>
</dbReference>
<dbReference type="PANTHER" id="PTHR23137:SF24">
    <property type="entry name" value="VESICLE TRANSPORT PROTEIN SFT2A"/>
    <property type="match status" value="1"/>
</dbReference>
<dbReference type="PANTHER" id="PTHR23137">
    <property type="entry name" value="VESICLE TRANSPORT PROTEIN-RELATED"/>
    <property type="match status" value="1"/>
</dbReference>
<dbReference type="Pfam" id="PF04178">
    <property type="entry name" value="Got1"/>
    <property type="match status" value="1"/>
</dbReference>
<gene>
    <name evidence="6" type="primary">SFT2D1</name>
    <name type="synonym">C6orf83</name>
</gene>
<comment type="function">
    <text evidence="1">May be involved in fusion of retrograde transport vesicles derived from an endocytic compartment with the Golgi complex.</text>
</comment>
<comment type="interaction">
    <interactant intactId="EBI-2854842">
        <id>Q8WV19</id>
    </interactant>
    <interactant intactId="EBI-13059134">
        <id>Q13520</id>
        <label>AQP6</label>
    </interactant>
    <organismsDiffer>false</organismsDiffer>
    <experiments>3</experiments>
</comment>
<comment type="interaction">
    <interactant intactId="EBI-2854842">
        <id>Q8WV19</id>
    </interactant>
    <interactant intactId="EBI-2808808">
        <id>P53367</id>
        <label>ARFIP1</label>
    </interactant>
    <organismsDiffer>false</organismsDiffer>
    <experiments>3</experiments>
</comment>
<comment type="interaction">
    <interactant intactId="EBI-2854842">
        <id>Q8WV19</id>
    </interactant>
    <interactant intactId="EBI-12261896">
        <id>Q5T4B2</id>
        <label>CERCAM</label>
    </interactant>
    <organismsDiffer>false</organismsDiffer>
    <experiments>3</experiments>
</comment>
<comment type="interaction">
    <interactant intactId="EBI-2854842">
        <id>Q8WV19</id>
    </interactant>
    <interactant intactId="EBI-7962814">
        <id>Q9GZP9</id>
        <label>DERL2</label>
    </interactant>
    <organismsDiffer>false</organismsDiffer>
    <experiments>3</experiments>
</comment>
<comment type="interaction">
    <interactant intactId="EBI-2854842">
        <id>Q8WV19</id>
    </interactant>
    <interactant intactId="EBI-517508">
        <id>Q9NR28</id>
        <label>DIABLO</label>
    </interactant>
    <organismsDiffer>false</organismsDiffer>
    <experiments>3</experiments>
</comment>
<comment type="interaction">
    <interactant intactId="EBI-2854842">
        <id>Q8WV19</id>
    </interactant>
    <interactant intactId="EBI-2339219">
        <id>Q08426</id>
        <label>EHHADH</label>
    </interactant>
    <organismsDiffer>false</organismsDiffer>
    <experiments>3</experiments>
</comment>
<comment type="interaction">
    <interactant intactId="EBI-2854842">
        <id>Q8WV19</id>
    </interactant>
    <interactant intactId="EBI-11988931">
        <id>Q96C03-3</id>
        <label>MIEF2</label>
    </interactant>
    <organismsDiffer>false</organismsDiffer>
    <experiments>3</experiments>
</comment>
<comment type="interaction">
    <interactant intactId="EBI-2854842">
        <id>Q8WV19</id>
    </interactant>
    <interactant intactId="EBI-6929133">
        <id>P26927</id>
        <label>MST1</label>
    </interactant>
    <organismsDiffer>false</organismsDiffer>
    <experiments>3</experiments>
</comment>
<comment type="interaction">
    <interactant intactId="EBI-2854842">
        <id>Q8WV19</id>
    </interactant>
    <interactant intactId="EBI-709754">
        <id>Q9HB07</id>
        <label>MYG1</label>
    </interactant>
    <organismsDiffer>false</organismsDiffer>
    <experiments>3</experiments>
</comment>
<comment type="interaction">
    <interactant intactId="EBI-2854842">
        <id>Q8WV19</id>
    </interactant>
    <interactant intactId="EBI-11978907">
        <id>Q9ULP0-2</id>
        <label>NDRG4</label>
    </interactant>
    <organismsDiffer>false</organismsDiffer>
    <experiments>3</experiments>
</comment>
<comment type="interaction">
    <interactant intactId="EBI-2854842">
        <id>Q8WV19</id>
    </interactant>
    <interactant intactId="EBI-750730">
        <id>Q96BN8</id>
        <label>OTULIN</label>
    </interactant>
    <organismsDiffer>false</organismsDiffer>
    <experiments>3</experiments>
</comment>
<comment type="interaction">
    <interactant intactId="EBI-2854842">
        <id>Q8WV19</id>
    </interactant>
    <interactant intactId="EBI-373552">
        <id>Q96CS7</id>
        <label>PLEKHB2</label>
    </interactant>
    <organismsDiffer>false</organismsDiffer>
    <experiments>3</experiments>
</comment>
<comment type="interaction">
    <interactant intactId="EBI-2854842">
        <id>Q8WV19</id>
    </interactant>
    <interactant intactId="EBI-1045072">
        <id>Q96T60</id>
        <label>PNKP</label>
    </interactant>
    <organismsDiffer>false</organismsDiffer>
    <experiments>3</experiments>
</comment>
<comment type="interaction">
    <interactant intactId="EBI-2854842">
        <id>Q8WV19</id>
    </interactant>
    <interactant intactId="EBI-7545592">
        <id>Q9H6H4</id>
        <label>REEP4</label>
    </interactant>
    <organismsDiffer>false</organismsDiffer>
    <experiments>3</experiments>
</comment>
<comment type="interaction">
    <interactant intactId="EBI-2854842">
        <id>Q8WV19</id>
    </interactant>
    <interactant intactId="EBI-10192441">
        <id>Q86VR2</id>
        <label>RETREG3</label>
    </interactant>
    <organismsDiffer>false</organismsDiffer>
    <experiments>3</experiments>
</comment>
<comment type="interaction">
    <interactant intactId="EBI-2854842">
        <id>Q8WV19</id>
    </interactant>
    <interactant intactId="EBI-745846">
        <id>P57086</id>
        <label>SCAND1</label>
    </interactant>
    <organismsDiffer>false</organismsDiffer>
    <experiments>3</experiments>
</comment>
<comment type="interaction">
    <interactant intactId="EBI-2854842">
        <id>Q8WV19</id>
    </interactant>
    <interactant intactId="EBI-17247926">
        <id>Q9NY72</id>
        <label>SCN3B</label>
    </interactant>
    <organismsDiffer>false</organismsDiffer>
    <experiments>3</experiments>
</comment>
<comment type="interaction">
    <interactant intactId="EBI-2854842">
        <id>Q8WV19</id>
    </interactant>
    <interactant intactId="EBI-727004">
        <id>O00560</id>
        <label>SDCBP</label>
    </interactant>
    <organismsDiffer>false</organismsDiffer>
    <experiments>3</experiments>
</comment>
<comment type="interaction">
    <interactant intactId="EBI-2854842">
        <id>Q8WV19</id>
    </interactant>
    <interactant intactId="EBI-3923031">
        <id>Q14973</id>
        <label>SLC10A1</label>
    </interactant>
    <organismsDiffer>false</organismsDiffer>
    <experiments>3</experiments>
</comment>
<comment type="interaction">
    <interactant intactId="EBI-2854842">
        <id>Q8WV19</id>
    </interactant>
    <interactant intactId="EBI-10262251">
        <id>Q8IWU4</id>
        <label>SLC30A8</label>
    </interactant>
    <organismsDiffer>false</organismsDiffer>
    <experiments>3</experiments>
</comment>
<comment type="interaction">
    <interactant intactId="EBI-2854842">
        <id>Q8WV19</id>
    </interactant>
    <interactant intactId="EBI-2822329">
        <id>Q13596</id>
        <label>SNX1</label>
    </interactant>
    <organismsDiffer>false</organismsDiffer>
    <experiments>3</experiments>
</comment>
<comment type="interaction">
    <interactant intactId="EBI-2854842">
        <id>Q8WV19</id>
    </interactant>
    <interactant intactId="EBI-742688">
        <id>Q9NZD8</id>
        <label>SPG21</label>
    </interactant>
    <organismsDiffer>false</organismsDiffer>
    <experiments>3</experiments>
</comment>
<comment type="interaction">
    <interactant intactId="EBI-2854842">
        <id>Q8WV19</id>
    </interactant>
    <interactant intactId="EBI-1211440">
        <id>P27105</id>
        <label>STOM</label>
    </interactant>
    <organismsDiffer>false</organismsDiffer>
    <experiments>3</experiments>
</comment>
<comment type="interaction">
    <interactant intactId="EBI-2854842">
        <id>Q8WV19</id>
    </interactant>
    <interactant intactId="EBI-10238936">
        <id>Q17RD7</id>
        <label>SYT16</label>
    </interactant>
    <organismsDiffer>false</organismsDiffer>
    <experiments>3</experiments>
</comment>
<comment type="interaction">
    <interactant intactId="EBI-2854842">
        <id>Q8WV19</id>
    </interactant>
    <interactant intactId="EBI-1045099">
        <id>Q9BW92</id>
        <label>TARS2</label>
    </interactant>
    <organismsDiffer>false</organismsDiffer>
    <experiments>3</experiments>
</comment>
<comment type="interaction">
    <interactant intactId="EBI-2854842">
        <id>Q8WV19</id>
    </interactant>
    <interactant intactId="EBI-702328">
        <id>Q969Z0</id>
        <label>TBRG4</label>
    </interactant>
    <organismsDiffer>false</organismsDiffer>
    <experiments>3</experiments>
</comment>
<comment type="interaction">
    <interactant intactId="EBI-2854842">
        <id>Q8WV19</id>
    </interactant>
    <interactant intactId="EBI-8638294">
        <id>Q9NUH8</id>
        <label>TMEM14B</label>
    </interactant>
    <organismsDiffer>false</organismsDiffer>
    <experiments>3</experiments>
</comment>
<comment type="interaction">
    <interactant intactId="EBI-2854842">
        <id>Q8WV19</id>
    </interactant>
    <interactant intactId="EBI-2870087">
        <id>Q8WV15</id>
        <label>TMEM255B</label>
    </interactant>
    <organismsDiffer>false</organismsDiffer>
    <experiments>3</experiments>
</comment>
<comment type="interaction">
    <interactant intactId="EBI-2854842">
        <id>Q8WV19</id>
    </interactant>
    <interactant intactId="EBI-2548832">
        <id>Q8N661</id>
        <label>TMEM86B</label>
    </interactant>
    <organismsDiffer>false</organismsDiffer>
    <experiments>3</experiments>
</comment>
<comment type="interaction">
    <interactant intactId="EBI-2854842">
        <id>Q8WV19</id>
    </interactant>
    <interactant intactId="EBI-6447886">
        <id>Q9Y320</id>
        <label>TMX2</label>
    </interactant>
    <organismsDiffer>false</organismsDiffer>
    <experiments>3</experiments>
</comment>
<comment type="subcellular location">
    <subcellularLocation>
        <location evidence="3">Membrane</location>
        <topology evidence="3">Multi-pass membrane protein</topology>
    </subcellularLocation>
</comment>
<comment type="similarity">
    <text evidence="3">Belongs to the SFT2 family.</text>
</comment>
<comment type="sequence caution" evidence="4">
    <conflict type="erroneous initiation">
        <sequence resource="EMBL-CDS" id="AAF18564"/>
    </conflict>
</comment>
<name>SFT2A_HUMAN</name>
<organism>
    <name type="scientific">Homo sapiens</name>
    <name type="common">Human</name>
    <dbReference type="NCBI Taxonomy" id="9606"/>
    <lineage>
        <taxon>Eukaryota</taxon>
        <taxon>Metazoa</taxon>
        <taxon>Chordata</taxon>
        <taxon>Craniata</taxon>
        <taxon>Vertebrata</taxon>
        <taxon>Euteleostomi</taxon>
        <taxon>Mammalia</taxon>
        <taxon>Eutheria</taxon>
        <taxon>Euarchontoglires</taxon>
        <taxon>Primates</taxon>
        <taxon>Haplorrhini</taxon>
        <taxon>Catarrhini</taxon>
        <taxon>Hominidae</taxon>
        <taxon>Homo</taxon>
    </lineage>
</organism>
<proteinExistence type="evidence at protein level"/>
<reference evidence="5" key="1">
    <citation type="submission" date="1998-01" db="EMBL/GenBank/DDBJ databases">
        <authorList>
            <person name="Hu Y.F."/>
            <person name="Mao X.H."/>
            <person name="Zhuang M."/>
            <person name="Lu C.D."/>
        </authorList>
    </citation>
    <scope>NUCLEOTIDE SEQUENCE [MRNA]</scope>
</reference>
<reference key="2">
    <citation type="journal article" date="2003" name="Nature">
        <title>The DNA sequence and analysis of human chromosome 6.</title>
        <authorList>
            <person name="Mungall A.J."/>
            <person name="Palmer S.A."/>
            <person name="Sims S.K."/>
            <person name="Edwards C.A."/>
            <person name="Ashurst J.L."/>
            <person name="Wilming L."/>
            <person name="Jones M.C."/>
            <person name="Horton R."/>
            <person name="Hunt S.E."/>
            <person name="Scott C.E."/>
            <person name="Gilbert J.G.R."/>
            <person name="Clamp M.E."/>
            <person name="Bethel G."/>
            <person name="Milne S."/>
            <person name="Ainscough R."/>
            <person name="Almeida J.P."/>
            <person name="Ambrose K.D."/>
            <person name="Andrews T.D."/>
            <person name="Ashwell R.I.S."/>
            <person name="Babbage A.K."/>
            <person name="Bagguley C.L."/>
            <person name="Bailey J."/>
            <person name="Banerjee R."/>
            <person name="Barker D.J."/>
            <person name="Barlow K.F."/>
            <person name="Bates K."/>
            <person name="Beare D.M."/>
            <person name="Beasley H."/>
            <person name="Beasley O."/>
            <person name="Bird C.P."/>
            <person name="Blakey S.E."/>
            <person name="Bray-Allen S."/>
            <person name="Brook J."/>
            <person name="Brown A.J."/>
            <person name="Brown J.Y."/>
            <person name="Burford D.C."/>
            <person name="Burrill W."/>
            <person name="Burton J."/>
            <person name="Carder C."/>
            <person name="Carter N.P."/>
            <person name="Chapman J.C."/>
            <person name="Clark S.Y."/>
            <person name="Clark G."/>
            <person name="Clee C.M."/>
            <person name="Clegg S."/>
            <person name="Cobley V."/>
            <person name="Collier R.E."/>
            <person name="Collins J.E."/>
            <person name="Colman L.K."/>
            <person name="Corby N.R."/>
            <person name="Coville G.J."/>
            <person name="Culley K.M."/>
            <person name="Dhami P."/>
            <person name="Davies J."/>
            <person name="Dunn M."/>
            <person name="Earthrowl M.E."/>
            <person name="Ellington A.E."/>
            <person name="Evans K.A."/>
            <person name="Faulkner L."/>
            <person name="Francis M.D."/>
            <person name="Frankish A."/>
            <person name="Frankland J."/>
            <person name="French L."/>
            <person name="Garner P."/>
            <person name="Garnett J."/>
            <person name="Ghori M.J."/>
            <person name="Gilby L.M."/>
            <person name="Gillson C.J."/>
            <person name="Glithero R.J."/>
            <person name="Grafham D.V."/>
            <person name="Grant M."/>
            <person name="Gribble S."/>
            <person name="Griffiths C."/>
            <person name="Griffiths M.N.D."/>
            <person name="Hall R."/>
            <person name="Halls K.S."/>
            <person name="Hammond S."/>
            <person name="Harley J.L."/>
            <person name="Hart E.A."/>
            <person name="Heath P.D."/>
            <person name="Heathcott R."/>
            <person name="Holmes S.J."/>
            <person name="Howden P.J."/>
            <person name="Howe K.L."/>
            <person name="Howell G.R."/>
            <person name="Huckle E."/>
            <person name="Humphray S.J."/>
            <person name="Humphries M.D."/>
            <person name="Hunt A.R."/>
            <person name="Johnson C.M."/>
            <person name="Joy A.A."/>
            <person name="Kay M."/>
            <person name="Keenan S.J."/>
            <person name="Kimberley A.M."/>
            <person name="King A."/>
            <person name="Laird G.K."/>
            <person name="Langford C."/>
            <person name="Lawlor S."/>
            <person name="Leongamornlert D.A."/>
            <person name="Leversha M."/>
            <person name="Lloyd C.R."/>
            <person name="Lloyd D.M."/>
            <person name="Loveland J.E."/>
            <person name="Lovell J."/>
            <person name="Martin S."/>
            <person name="Mashreghi-Mohammadi M."/>
            <person name="Maslen G.L."/>
            <person name="Matthews L."/>
            <person name="McCann O.T."/>
            <person name="McLaren S.J."/>
            <person name="McLay K."/>
            <person name="McMurray A."/>
            <person name="Moore M.J.F."/>
            <person name="Mullikin J.C."/>
            <person name="Niblett D."/>
            <person name="Nickerson T."/>
            <person name="Novik K.L."/>
            <person name="Oliver K."/>
            <person name="Overton-Larty E.K."/>
            <person name="Parker A."/>
            <person name="Patel R."/>
            <person name="Pearce A.V."/>
            <person name="Peck A.I."/>
            <person name="Phillimore B.J.C.T."/>
            <person name="Phillips S."/>
            <person name="Plumb R.W."/>
            <person name="Porter K.M."/>
            <person name="Ramsey Y."/>
            <person name="Ranby S.A."/>
            <person name="Rice C.M."/>
            <person name="Ross M.T."/>
            <person name="Searle S.M."/>
            <person name="Sehra H.K."/>
            <person name="Sheridan E."/>
            <person name="Skuce C.D."/>
            <person name="Smith S."/>
            <person name="Smith M."/>
            <person name="Spraggon L."/>
            <person name="Squares S.L."/>
            <person name="Steward C.A."/>
            <person name="Sycamore N."/>
            <person name="Tamlyn-Hall G."/>
            <person name="Tester J."/>
            <person name="Theaker A.J."/>
            <person name="Thomas D.W."/>
            <person name="Thorpe A."/>
            <person name="Tracey A."/>
            <person name="Tromans A."/>
            <person name="Tubby B."/>
            <person name="Wall M."/>
            <person name="Wallis J.M."/>
            <person name="West A.P."/>
            <person name="White S.S."/>
            <person name="Whitehead S.L."/>
            <person name="Whittaker H."/>
            <person name="Wild A."/>
            <person name="Willey D.J."/>
            <person name="Wilmer T.E."/>
            <person name="Wood J.M."/>
            <person name="Wray P.W."/>
            <person name="Wyatt J.C."/>
            <person name="Young L."/>
            <person name="Younger R.M."/>
            <person name="Bentley D.R."/>
            <person name="Coulson A."/>
            <person name="Durbin R.M."/>
            <person name="Hubbard T."/>
            <person name="Sulston J.E."/>
            <person name="Dunham I."/>
            <person name="Rogers J."/>
            <person name="Beck S."/>
        </authorList>
    </citation>
    <scope>NUCLEOTIDE SEQUENCE [LARGE SCALE GENOMIC DNA]</scope>
</reference>
<reference evidence="6" key="3">
    <citation type="journal article" date="2004" name="Genome Res.">
        <title>The status, quality, and expansion of the NIH full-length cDNA project: the Mammalian Gene Collection (MGC).</title>
        <authorList>
            <consortium name="The MGC Project Team"/>
        </authorList>
    </citation>
    <scope>NUCLEOTIDE SEQUENCE [LARGE SCALE MRNA]</scope>
    <source>
        <tissue>Choriocarcinoma</tissue>
    </source>
</reference>
<reference key="4">
    <citation type="journal article" date="2011" name="BMC Syst. Biol.">
        <title>Initial characterization of the human central proteome.</title>
        <authorList>
            <person name="Burkard T.R."/>
            <person name="Planyavsky M."/>
            <person name="Kaupe I."/>
            <person name="Breitwieser F.P."/>
            <person name="Buerckstuemmer T."/>
            <person name="Bennett K.L."/>
            <person name="Superti-Furga G."/>
            <person name="Colinge J."/>
        </authorList>
    </citation>
    <scope>IDENTIFICATION BY MASS SPECTROMETRY [LARGE SCALE ANALYSIS]</scope>
</reference>
<evidence type="ECO:0000250" key="1">
    <source>
        <dbReference type="UniProtKB" id="P38166"/>
    </source>
</evidence>
<evidence type="ECO:0000250" key="2">
    <source>
        <dbReference type="UniProtKB" id="Q5SSN7"/>
    </source>
</evidence>
<evidence type="ECO:0000255" key="3"/>
<evidence type="ECO:0000305" key="4"/>
<evidence type="ECO:0000312" key="5">
    <source>
        <dbReference type="EMBL" id="AAF18564.1"/>
    </source>
</evidence>
<evidence type="ECO:0000312" key="6">
    <source>
        <dbReference type="EMBL" id="AAH18969.1"/>
    </source>
</evidence>
<keyword id="KW-0472">Membrane</keyword>
<keyword id="KW-0597">Phosphoprotein</keyword>
<keyword id="KW-0653">Protein transport</keyword>
<keyword id="KW-1267">Proteomics identification</keyword>
<keyword id="KW-1185">Reference proteome</keyword>
<keyword id="KW-0812">Transmembrane</keyword>
<keyword id="KW-1133">Transmembrane helix</keyword>
<keyword id="KW-0813">Transport</keyword>